<protein>
    <recommendedName>
        <fullName evidence="5">Diacylglycerol O-acyltransferase 2</fullName>
        <ecNumber evidence="2">2.3.1.20</ecNumber>
    </recommendedName>
    <alternativeName>
        <fullName>Acyl-CoA retinol O-fatty-acyltransferase</fullName>
        <shortName>ARAT</shortName>
        <shortName>Retinol O-fatty-acyltransferase</shortName>
        <ecNumber evidence="2">2.3.1.76</ecNumber>
    </alternativeName>
    <alternativeName>
        <fullName>Diglyceride acyltransferase 2</fullName>
    </alternativeName>
</protein>
<sequence length="388" mass="43795">MKTLIAAYSGVLRGERRAEAARSENKNKGSALSREGSGRWGTGSSILSALQDIFSVTWLNRSKVEKHLQVISVLQWVLSFLVLGVACSVILMYTFCTDCWLIAALYFTWLAFDWNTPKKGGRRSQWVRNWAVWRYFRDYFPIQLVKTHNLLTTRNYIFGYHPHGIMGLGAFCNFSTEATEVSKKFPGIRPYLATLAGNFRMPVLREYLMSGGICPVNRDTIDYLLSKNGSGNAIVIVVGGAAESLSSMPGKNAVTLRNRKGFVKLALRHGADLVPTYSFGENEVYKQVIFEEGSWGRWVQKKFQKYIGFAPCIFHGRGLFSSDTWGLVPYSKPITTVVGEPITVPKLEHPTQKDIDLYHTMYMEALVKLFDNHKTKFGLPETEVLEVN</sequence>
<name>DGAT2_RAT</name>
<keyword id="KW-0012">Acyltransferase</keyword>
<keyword id="KW-0963">Cytoplasm</keyword>
<keyword id="KW-0256">Endoplasmic reticulum</keyword>
<keyword id="KW-0319">Glycerol metabolism</keyword>
<keyword id="KW-0444">Lipid biosynthesis</keyword>
<keyword id="KW-0551">Lipid droplet</keyword>
<keyword id="KW-0443">Lipid metabolism</keyword>
<keyword id="KW-0472">Membrane</keyword>
<keyword id="KW-1185">Reference proteome</keyword>
<keyword id="KW-0808">Transferase</keyword>
<keyword id="KW-0812">Transmembrane</keyword>
<keyword id="KW-1133">Transmembrane helix</keyword>
<organism>
    <name type="scientific">Rattus norvegicus</name>
    <name type="common">Rat</name>
    <dbReference type="NCBI Taxonomy" id="10116"/>
    <lineage>
        <taxon>Eukaryota</taxon>
        <taxon>Metazoa</taxon>
        <taxon>Chordata</taxon>
        <taxon>Craniata</taxon>
        <taxon>Vertebrata</taxon>
        <taxon>Euteleostomi</taxon>
        <taxon>Mammalia</taxon>
        <taxon>Eutheria</taxon>
        <taxon>Euarchontoglires</taxon>
        <taxon>Glires</taxon>
        <taxon>Rodentia</taxon>
        <taxon>Myomorpha</taxon>
        <taxon>Muroidea</taxon>
        <taxon>Muridae</taxon>
        <taxon>Murinae</taxon>
        <taxon>Rattus</taxon>
    </lineage>
</organism>
<feature type="chain" id="PRO_0000249047" description="Diacylglycerol O-acyltransferase 2">
    <location>
        <begin position="1"/>
        <end position="388"/>
    </location>
</feature>
<feature type="topological domain" description="Cytoplasmic" evidence="4">
    <location>
        <begin position="1"/>
        <end position="69"/>
    </location>
</feature>
<feature type="transmembrane region" description="Helical" evidence="4">
    <location>
        <begin position="70"/>
        <end position="88"/>
    </location>
</feature>
<feature type="topological domain" description="Lumenal" evidence="4">
    <location>
        <begin position="89"/>
        <end position="92"/>
    </location>
</feature>
<feature type="transmembrane region" description="Helical" evidence="4">
    <location>
        <begin position="93"/>
        <end position="112"/>
    </location>
</feature>
<feature type="topological domain" description="Cytoplasmic" evidence="4">
    <location>
        <begin position="113"/>
        <end position="388"/>
    </location>
</feature>
<comment type="function">
    <text evidence="2 3">Essential acyltransferase that catalyzes the terminal and only committed step in triacylglycerol synthesis by using diacylglycerol and fatty acyl CoA as substrates. Required for synthesis and storage of intracellular triglycerides (By similarity). Probably plays a central role in cytosolic lipid accumulation. In liver, is primarily responsible for incorporating endogenously synthesized fatty acids into triglycerides (By similarity). Also functions as an acyl-CoA retinol acyltransferase (ARAT) (By similarity). Also able to use 1-monoalkylglycerol (1-MAkG) as an acyl acceptor for the synthesis of monoalkyl-monoacylglycerol (MAMAG) (By similarity).</text>
</comment>
<comment type="catalytic activity">
    <reaction evidence="2">
        <text>an acyl-CoA + a 1,2-diacyl-sn-glycerol = a triacyl-sn-glycerol + CoA</text>
        <dbReference type="Rhea" id="RHEA:10868"/>
        <dbReference type="ChEBI" id="CHEBI:17815"/>
        <dbReference type="ChEBI" id="CHEBI:57287"/>
        <dbReference type="ChEBI" id="CHEBI:58342"/>
        <dbReference type="ChEBI" id="CHEBI:64615"/>
        <dbReference type="EC" id="2.3.1.20"/>
    </reaction>
    <physiologicalReaction direction="left-to-right" evidence="2">
        <dbReference type="Rhea" id="RHEA:10869"/>
    </physiologicalReaction>
</comment>
<comment type="catalytic activity">
    <reaction evidence="2">
        <text>all-trans-retinol + an acyl-CoA = an all-trans-retinyl ester + CoA</text>
        <dbReference type="Rhea" id="RHEA:11488"/>
        <dbReference type="ChEBI" id="CHEBI:17336"/>
        <dbReference type="ChEBI" id="CHEBI:57287"/>
        <dbReference type="ChEBI" id="CHEBI:58342"/>
        <dbReference type="ChEBI" id="CHEBI:63410"/>
        <dbReference type="EC" id="2.3.1.76"/>
    </reaction>
    <physiologicalReaction direction="left-to-right" evidence="2">
        <dbReference type="Rhea" id="RHEA:11489"/>
    </physiologicalReaction>
</comment>
<comment type="catalytic activity">
    <reaction evidence="2">
        <text>2-(9Z-octadecenoyl)-glycerol + (9Z)-octadecenoyl-CoA = 1,2-di-(9Z-octadecenoyl)-sn-glycerol + CoA</text>
        <dbReference type="Rhea" id="RHEA:37911"/>
        <dbReference type="ChEBI" id="CHEBI:52333"/>
        <dbReference type="ChEBI" id="CHEBI:57287"/>
        <dbReference type="ChEBI" id="CHEBI:57387"/>
        <dbReference type="ChEBI" id="CHEBI:73990"/>
    </reaction>
    <physiologicalReaction direction="left-to-right" evidence="2">
        <dbReference type="Rhea" id="RHEA:37912"/>
    </physiologicalReaction>
</comment>
<comment type="catalytic activity">
    <reaction evidence="2">
        <text>1,2-di-(9Z-octadecenoyl)-sn-glycerol + (9Z)-octadecenoyl-CoA = 1,2,3-tri-(9Z-octadecenoyl)-glycerol + CoA</text>
        <dbReference type="Rhea" id="RHEA:38219"/>
        <dbReference type="ChEBI" id="CHEBI:52333"/>
        <dbReference type="ChEBI" id="CHEBI:53753"/>
        <dbReference type="ChEBI" id="CHEBI:57287"/>
        <dbReference type="ChEBI" id="CHEBI:57387"/>
    </reaction>
    <physiologicalReaction direction="left-to-right" evidence="2">
        <dbReference type="Rhea" id="RHEA:38220"/>
    </physiologicalReaction>
</comment>
<comment type="catalytic activity">
    <reaction evidence="2">
        <text>all-trans-retinol + hexadecanoyl-CoA = all-trans-retinyl hexadecanoate + CoA</text>
        <dbReference type="Rhea" id="RHEA:38175"/>
        <dbReference type="ChEBI" id="CHEBI:17336"/>
        <dbReference type="ChEBI" id="CHEBI:17616"/>
        <dbReference type="ChEBI" id="CHEBI:57287"/>
        <dbReference type="ChEBI" id="CHEBI:57379"/>
    </reaction>
    <physiologicalReaction direction="left-to-right" evidence="2">
        <dbReference type="Rhea" id="RHEA:38176"/>
    </physiologicalReaction>
</comment>
<comment type="catalytic activity">
    <reaction evidence="2">
        <text>1-O-(9Z-octadecenyl)-glycerol + (9Z)-octadecenoyl-CoA = 1-O-(9Z-octadecyl)-3-(9Z-octadecenoyl)-glycerol + CoA</text>
        <dbReference type="Rhea" id="RHEA:55340"/>
        <dbReference type="ChEBI" id="CHEBI:34116"/>
        <dbReference type="ChEBI" id="CHEBI:57287"/>
        <dbReference type="ChEBI" id="CHEBI:57387"/>
        <dbReference type="ChEBI" id="CHEBI:197429"/>
    </reaction>
    <physiologicalReaction direction="left-to-right" evidence="2">
        <dbReference type="Rhea" id="RHEA:55341"/>
    </physiologicalReaction>
</comment>
<comment type="catalytic activity">
    <reaction evidence="2">
        <text>1-(9Z-octadecenoyl)-glycerol + (9Z)-octadecenoyl-CoA = 1,2-di-(9Z-octadecenoyl)-glycerol + CoA</text>
        <dbReference type="Rhea" id="RHEA:37915"/>
        <dbReference type="ChEBI" id="CHEBI:52323"/>
        <dbReference type="ChEBI" id="CHEBI:57287"/>
        <dbReference type="ChEBI" id="CHEBI:57387"/>
        <dbReference type="ChEBI" id="CHEBI:75342"/>
    </reaction>
    <physiologicalReaction direction="left-to-right" evidence="2">
        <dbReference type="Rhea" id="RHEA:37916"/>
    </physiologicalReaction>
</comment>
<comment type="catalytic activity">
    <reaction evidence="3">
        <text>1,2-di-(9Z-octadecenoyl)-sn-glycerol + hexadecanoyl-CoA = 1,2-di-(9Z)-octadecenoyl-3-hexadecanoyl-sn-glycerol + CoA</text>
        <dbReference type="Rhea" id="RHEA:38163"/>
        <dbReference type="ChEBI" id="CHEBI:52333"/>
        <dbReference type="ChEBI" id="CHEBI:57287"/>
        <dbReference type="ChEBI" id="CHEBI:57379"/>
        <dbReference type="ChEBI" id="CHEBI:75583"/>
    </reaction>
    <physiologicalReaction direction="left-to-right" evidence="3">
        <dbReference type="Rhea" id="RHEA:38164"/>
    </physiologicalReaction>
</comment>
<comment type="catalytic activity">
    <reaction evidence="3">
        <text>1,3-di-(9Z-octadecenoyl)-glycerol + (9Z)-octadecenoyl-CoA = 1,2,3-tri-(9Z-octadecenoyl)-glycerol + CoA</text>
        <dbReference type="Rhea" id="RHEA:38435"/>
        <dbReference type="ChEBI" id="CHEBI:53753"/>
        <dbReference type="ChEBI" id="CHEBI:57287"/>
        <dbReference type="ChEBI" id="CHEBI:57387"/>
        <dbReference type="ChEBI" id="CHEBI:75735"/>
    </reaction>
    <physiologicalReaction direction="left-to-right" evidence="3">
        <dbReference type="Rhea" id="RHEA:38436"/>
    </physiologicalReaction>
</comment>
<comment type="catalytic activity">
    <reaction evidence="3">
        <text>2,3-di-(9Z)-octadecenoyl-sn-glycerol + (9Z)-octadecenoyl-CoA = 1,2,3-tri-(9Z-octadecenoyl)-glycerol + CoA</text>
        <dbReference type="Rhea" id="RHEA:38439"/>
        <dbReference type="ChEBI" id="CHEBI:53753"/>
        <dbReference type="ChEBI" id="CHEBI:57287"/>
        <dbReference type="ChEBI" id="CHEBI:57387"/>
        <dbReference type="ChEBI" id="CHEBI:75824"/>
    </reaction>
    <physiologicalReaction direction="left-to-right" evidence="3">
        <dbReference type="Rhea" id="RHEA:38440"/>
    </physiologicalReaction>
</comment>
<comment type="catalytic activity">
    <reaction evidence="3">
        <text>2-(9Z-octadecenoyl)-glycerol + hexadecanoyl-CoA = 1-hexadecanoyl-2-(9Z-octadecenoyl)-sn-glycerol + CoA</text>
        <dbReference type="Rhea" id="RHEA:38071"/>
        <dbReference type="ChEBI" id="CHEBI:57287"/>
        <dbReference type="ChEBI" id="CHEBI:57379"/>
        <dbReference type="ChEBI" id="CHEBI:73990"/>
        <dbReference type="ChEBI" id="CHEBI:75466"/>
    </reaction>
    <physiologicalReaction direction="left-to-right" evidence="3">
        <dbReference type="Rhea" id="RHEA:38072"/>
    </physiologicalReaction>
</comment>
<comment type="activity regulation">
    <text evidence="1">Inhibited by niacin.</text>
</comment>
<comment type="pathway">
    <text>Glycerolipid metabolism; triacylglycerol biosynthesis.</text>
</comment>
<comment type="subunit">
    <text evidence="2 3">Forms multimeric complexes consisting of several DGAT2 subunits (By similarity). Interacts with SLC27A1 and this interaction is enhanced in the presence of ZFYVE1 (By similarity).</text>
</comment>
<comment type="subcellular location">
    <subcellularLocation>
        <location evidence="2">Endoplasmic reticulum membrane</location>
        <topology evidence="2">Multi-pass membrane protein</topology>
    </subcellularLocation>
    <subcellularLocation>
        <location evidence="2">Lipid droplet</location>
    </subcellularLocation>
    <subcellularLocation>
        <location evidence="2">Cytoplasm</location>
        <location evidence="2">Perinuclear region</location>
    </subcellularLocation>
</comment>
<comment type="similarity">
    <text evidence="5">Belongs to the diacylglycerol acyltransferase family.</text>
</comment>
<proteinExistence type="evidence at transcript level"/>
<gene>
    <name evidence="6" type="primary">Dgat2</name>
</gene>
<accession>Q5FVP8</accession>
<accession>Q8K4Y4</accession>
<reference key="1">
    <citation type="journal article" date="2004" name="Genome Res.">
        <title>The status, quality, and expansion of the NIH full-length cDNA project: the Mammalian Gene Collection (MGC).</title>
        <authorList>
            <consortium name="The MGC Project Team"/>
        </authorList>
    </citation>
    <scope>NUCLEOTIDE SEQUENCE [LARGE SCALE MRNA]</scope>
    <source>
        <tissue>Liver</tissue>
    </source>
</reference>
<reference key="2">
    <citation type="submission" date="2002-05" db="EMBL/GenBank/DDBJ databases">
        <title>Sequencing of a partial rat DGAT2 cDNA.</title>
        <authorList>
            <person name="Waterman I.J."/>
            <person name="Zammit V.A."/>
            <person name="Price N.T."/>
        </authorList>
    </citation>
    <scope>NUCLEOTIDE SEQUENCE [MRNA] OF 177-327</scope>
    <source>
        <strain>Wistar</strain>
        <tissue>Liver</tissue>
    </source>
</reference>
<dbReference type="EC" id="2.3.1.20" evidence="2"/>
<dbReference type="EC" id="2.3.1.76" evidence="2"/>
<dbReference type="EMBL" id="BC089846">
    <property type="protein sequence ID" value="AAH89846.1"/>
    <property type="molecule type" value="mRNA"/>
</dbReference>
<dbReference type="EMBL" id="AJ487787">
    <property type="protein sequence ID" value="CAD32178.1"/>
    <property type="molecule type" value="mRNA"/>
</dbReference>
<dbReference type="RefSeq" id="NP_001012345.1">
    <property type="nucleotide sequence ID" value="NM_001012345.1"/>
</dbReference>
<dbReference type="FunCoup" id="Q5FVP8">
    <property type="interactions" value="153"/>
</dbReference>
<dbReference type="STRING" id="10116.ENSRNOP00000022557"/>
<dbReference type="BindingDB" id="Q5FVP8"/>
<dbReference type="ChEMBL" id="CHEMBL4295847"/>
<dbReference type="GuidetoPHARMACOLOGY" id="3211"/>
<dbReference type="PhosphoSitePlus" id="Q5FVP8"/>
<dbReference type="PaxDb" id="10116-ENSRNOP00000022557"/>
<dbReference type="GeneID" id="252900"/>
<dbReference type="KEGG" id="rno:252900"/>
<dbReference type="UCSC" id="RGD:620329">
    <property type="organism name" value="rat"/>
</dbReference>
<dbReference type="AGR" id="RGD:620329"/>
<dbReference type="CTD" id="84649"/>
<dbReference type="RGD" id="620329">
    <property type="gene designation" value="Dgat2"/>
</dbReference>
<dbReference type="VEuPathDB" id="HostDB:ENSRNOG00000016573"/>
<dbReference type="eggNOG" id="KOG0831">
    <property type="taxonomic scope" value="Eukaryota"/>
</dbReference>
<dbReference type="HOGENOM" id="CLU_023995_0_1_1"/>
<dbReference type="InParanoid" id="Q5FVP8"/>
<dbReference type="OrthoDB" id="264532at2759"/>
<dbReference type="PhylomeDB" id="Q5FVP8"/>
<dbReference type="TreeFam" id="TF314707"/>
<dbReference type="Reactome" id="R-RNO-1482883">
    <property type="pathway name" value="Acyl chain remodeling of DAG and TAG"/>
</dbReference>
<dbReference type="Reactome" id="R-RNO-75109">
    <property type="pathway name" value="Triglyceride biosynthesis"/>
</dbReference>
<dbReference type="UniPathway" id="UPA00282"/>
<dbReference type="PRO" id="PR:Q5FVP8"/>
<dbReference type="Proteomes" id="UP000002494">
    <property type="component" value="Chromosome 1"/>
</dbReference>
<dbReference type="Bgee" id="ENSRNOG00000016573">
    <property type="expression patterns" value="Expressed in liver and 19 other cell types or tissues"/>
</dbReference>
<dbReference type="ExpressionAtlas" id="Q5FVP8">
    <property type="expression patterns" value="baseline and differential"/>
</dbReference>
<dbReference type="GO" id="GO:0005829">
    <property type="term" value="C:cytosol"/>
    <property type="evidence" value="ECO:0007669"/>
    <property type="project" value="Ensembl"/>
</dbReference>
<dbReference type="GO" id="GO:0005783">
    <property type="term" value="C:endoplasmic reticulum"/>
    <property type="evidence" value="ECO:0000266"/>
    <property type="project" value="RGD"/>
</dbReference>
<dbReference type="GO" id="GO:0005789">
    <property type="term" value="C:endoplasmic reticulum membrane"/>
    <property type="evidence" value="ECO:0000250"/>
    <property type="project" value="UniProtKB"/>
</dbReference>
<dbReference type="GO" id="GO:0005811">
    <property type="term" value="C:lipid droplet"/>
    <property type="evidence" value="ECO:0000250"/>
    <property type="project" value="UniProtKB"/>
</dbReference>
<dbReference type="GO" id="GO:0016020">
    <property type="term" value="C:membrane"/>
    <property type="evidence" value="ECO:0000266"/>
    <property type="project" value="RGD"/>
</dbReference>
<dbReference type="GO" id="GO:0005739">
    <property type="term" value="C:mitochondrion"/>
    <property type="evidence" value="ECO:0000266"/>
    <property type="project" value="RGD"/>
</dbReference>
<dbReference type="GO" id="GO:1990578">
    <property type="term" value="C:perinuclear endoplasmic reticulum membrane"/>
    <property type="evidence" value="ECO:0000250"/>
    <property type="project" value="UniProtKB"/>
</dbReference>
<dbReference type="GO" id="GO:0048471">
    <property type="term" value="C:perinuclear region of cytoplasm"/>
    <property type="evidence" value="ECO:0000266"/>
    <property type="project" value="RGD"/>
</dbReference>
<dbReference type="GO" id="GO:0003846">
    <property type="term" value="F:2-acylglycerol O-acyltransferase activity"/>
    <property type="evidence" value="ECO:0000266"/>
    <property type="project" value="RGD"/>
</dbReference>
<dbReference type="GO" id="GO:0004144">
    <property type="term" value="F:diacylglycerol O-acyltransferase activity"/>
    <property type="evidence" value="ECO:0000314"/>
    <property type="project" value="RGD"/>
</dbReference>
<dbReference type="GO" id="GO:0042803">
    <property type="term" value="F:protein homodimerization activity"/>
    <property type="evidence" value="ECO:0000266"/>
    <property type="project" value="RGD"/>
</dbReference>
<dbReference type="GO" id="GO:0050252">
    <property type="term" value="F:retinol O-fatty-acyltransferase activity"/>
    <property type="evidence" value="ECO:0007669"/>
    <property type="project" value="UniProtKB-EC"/>
</dbReference>
<dbReference type="GO" id="GO:0071400">
    <property type="term" value="P:cellular response to oleic acid"/>
    <property type="evidence" value="ECO:0000266"/>
    <property type="project" value="RGD"/>
</dbReference>
<dbReference type="GO" id="GO:0042632">
    <property type="term" value="P:cholesterol homeostasis"/>
    <property type="evidence" value="ECO:0000266"/>
    <property type="project" value="RGD"/>
</dbReference>
<dbReference type="GO" id="GO:0006651">
    <property type="term" value="P:diacylglycerol biosynthetic process"/>
    <property type="evidence" value="ECO:0000250"/>
    <property type="project" value="UniProtKB"/>
</dbReference>
<dbReference type="GO" id="GO:0046339">
    <property type="term" value="P:diacylglycerol metabolic process"/>
    <property type="evidence" value="ECO:0000315"/>
    <property type="project" value="RGD"/>
</dbReference>
<dbReference type="GO" id="GO:0060613">
    <property type="term" value="P:fat pad development"/>
    <property type="evidence" value="ECO:0000266"/>
    <property type="project" value="RGD"/>
</dbReference>
<dbReference type="GO" id="GO:0055089">
    <property type="term" value="P:fatty acid homeostasis"/>
    <property type="evidence" value="ECO:0000266"/>
    <property type="project" value="RGD"/>
</dbReference>
<dbReference type="GO" id="GO:0006071">
    <property type="term" value="P:glycerol metabolic process"/>
    <property type="evidence" value="ECO:0007669"/>
    <property type="project" value="UniProtKB-KW"/>
</dbReference>
<dbReference type="GO" id="GO:0035356">
    <property type="term" value="P:intracellular triglyceride homeostasis"/>
    <property type="evidence" value="ECO:0000266"/>
    <property type="project" value="RGD"/>
</dbReference>
<dbReference type="GO" id="GO:0019915">
    <property type="term" value="P:lipid storage"/>
    <property type="evidence" value="ECO:0000266"/>
    <property type="project" value="RGD"/>
</dbReference>
<dbReference type="GO" id="GO:0035336">
    <property type="term" value="P:long-chain fatty-acyl-CoA metabolic process"/>
    <property type="evidence" value="ECO:0000266"/>
    <property type="project" value="RGD"/>
</dbReference>
<dbReference type="GO" id="GO:0034383">
    <property type="term" value="P:low-density lipoprotein particle clearance"/>
    <property type="evidence" value="ECO:0000266"/>
    <property type="project" value="RGD"/>
</dbReference>
<dbReference type="GO" id="GO:0006640">
    <property type="term" value="P:monoacylglycerol biosynthetic process"/>
    <property type="evidence" value="ECO:0000250"/>
    <property type="project" value="UniProtKB"/>
</dbReference>
<dbReference type="GO" id="GO:0046322">
    <property type="term" value="P:negative regulation of fatty acid oxidation"/>
    <property type="evidence" value="ECO:0000315"/>
    <property type="project" value="RGD"/>
</dbReference>
<dbReference type="GO" id="GO:0045722">
    <property type="term" value="P:positive regulation of gluconeogenesis"/>
    <property type="evidence" value="ECO:0000315"/>
    <property type="project" value="RGD"/>
</dbReference>
<dbReference type="GO" id="GO:0010867">
    <property type="term" value="P:positive regulation of triglyceride biosynthetic process"/>
    <property type="evidence" value="ECO:0000315"/>
    <property type="project" value="RGD"/>
</dbReference>
<dbReference type="GO" id="GO:0090181">
    <property type="term" value="P:regulation of cholesterol metabolic process"/>
    <property type="evidence" value="ECO:0000315"/>
    <property type="project" value="RGD"/>
</dbReference>
<dbReference type="GO" id="GO:0050746">
    <property type="term" value="P:regulation of lipoprotein metabolic process"/>
    <property type="evidence" value="ECO:0000315"/>
    <property type="project" value="RGD"/>
</dbReference>
<dbReference type="GO" id="GO:0097006">
    <property type="term" value="P:regulation of plasma lipoprotein particle levels"/>
    <property type="evidence" value="ECO:0000266"/>
    <property type="project" value="RGD"/>
</dbReference>
<dbReference type="GO" id="GO:0007584">
    <property type="term" value="P:response to nutrient"/>
    <property type="evidence" value="ECO:0000270"/>
    <property type="project" value="RGD"/>
</dbReference>
<dbReference type="GO" id="GO:0019432">
    <property type="term" value="P:triglyceride biosynthetic process"/>
    <property type="evidence" value="ECO:0000250"/>
    <property type="project" value="UniProtKB"/>
</dbReference>
<dbReference type="CDD" id="cd07987">
    <property type="entry name" value="LPLAT_MGAT-like"/>
    <property type="match status" value="1"/>
</dbReference>
<dbReference type="InterPro" id="IPR007130">
    <property type="entry name" value="DAGAT"/>
</dbReference>
<dbReference type="PANTHER" id="PTHR12317">
    <property type="entry name" value="DIACYLGLYCEROL O-ACYLTRANSFERASE"/>
    <property type="match status" value="1"/>
</dbReference>
<dbReference type="PANTHER" id="PTHR12317:SF14">
    <property type="entry name" value="DIACYLGLYCEROL O-ACYLTRANSFERASE 2"/>
    <property type="match status" value="1"/>
</dbReference>
<dbReference type="Pfam" id="PF03982">
    <property type="entry name" value="DAGAT"/>
    <property type="match status" value="1"/>
</dbReference>
<evidence type="ECO:0000250" key="1"/>
<evidence type="ECO:0000250" key="2">
    <source>
        <dbReference type="UniProtKB" id="Q96PD7"/>
    </source>
</evidence>
<evidence type="ECO:0000250" key="3">
    <source>
        <dbReference type="UniProtKB" id="Q9DCV3"/>
    </source>
</evidence>
<evidence type="ECO:0000255" key="4"/>
<evidence type="ECO:0000305" key="5"/>
<evidence type="ECO:0000312" key="6">
    <source>
        <dbReference type="RGD" id="620329"/>
    </source>
</evidence>